<gene>
    <name evidence="1" type="primary">purA</name>
    <name type="ordered locus">Tola_2381</name>
</gene>
<comment type="function">
    <text evidence="1">Plays an important role in the de novo pathway of purine nucleotide biosynthesis. Catalyzes the first committed step in the biosynthesis of AMP from IMP.</text>
</comment>
<comment type="catalytic activity">
    <reaction evidence="1">
        <text>IMP + L-aspartate + GTP = N(6)-(1,2-dicarboxyethyl)-AMP + GDP + phosphate + 2 H(+)</text>
        <dbReference type="Rhea" id="RHEA:15753"/>
        <dbReference type="ChEBI" id="CHEBI:15378"/>
        <dbReference type="ChEBI" id="CHEBI:29991"/>
        <dbReference type="ChEBI" id="CHEBI:37565"/>
        <dbReference type="ChEBI" id="CHEBI:43474"/>
        <dbReference type="ChEBI" id="CHEBI:57567"/>
        <dbReference type="ChEBI" id="CHEBI:58053"/>
        <dbReference type="ChEBI" id="CHEBI:58189"/>
        <dbReference type="EC" id="6.3.4.4"/>
    </reaction>
</comment>
<comment type="cofactor">
    <cofactor evidence="1">
        <name>Mg(2+)</name>
        <dbReference type="ChEBI" id="CHEBI:18420"/>
    </cofactor>
    <text evidence="1">Binds 1 Mg(2+) ion per subunit.</text>
</comment>
<comment type="pathway">
    <text evidence="1">Purine metabolism; AMP biosynthesis via de novo pathway; AMP from IMP: step 1/2.</text>
</comment>
<comment type="subunit">
    <text evidence="1">Homodimer.</text>
</comment>
<comment type="subcellular location">
    <subcellularLocation>
        <location evidence="1">Cytoplasm</location>
    </subcellularLocation>
</comment>
<comment type="similarity">
    <text evidence="1">Belongs to the adenylosuccinate synthetase family.</text>
</comment>
<evidence type="ECO:0000255" key="1">
    <source>
        <dbReference type="HAMAP-Rule" id="MF_00011"/>
    </source>
</evidence>
<feature type="chain" id="PRO_1000201769" description="Adenylosuccinate synthetase">
    <location>
        <begin position="1"/>
        <end position="432"/>
    </location>
</feature>
<feature type="active site" description="Proton acceptor" evidence="1">
    <location>
        <position position="14"/>
    </location>
</feature>
<feature type="active site" description="Proton donor" evidence="1">
    <location>
        <position position="42"/>
    </location>
</feature>
<feature type="binding site" evidence="1">
    <location>
        <begin position="13"/>
        <end position="19"/>
    </location>
    <ligand>
        <name>GTP</name>
        <dbReference type="ChEBI" id="CHEBI:37565"/>
    </ligand>
</feature>
<feature type="binding site" description="in other chain" evidence="1">
    <location>
        <begin position="14"/>
        <end position="17"/>
    </location>
    <ligand>
        <name>IMP</name>
        <dbReference type="ChEBI" id="CHEBI:58053"/>
        <note>ligand shared between dimeric partners</note>
    </ligand>
</feature>
<feature type="binding site" evidence="1">
    <location>
        <position position="14"/>
    </location>
    <ligand>
        <name>Mg(2+)</name>
        <dbReference type="ChEBI" id="CHEBI:18420"/>
    </ligand>
</feature>
<feature type="binding site" description="in other chain" evidence="1">
    <location>
        <begin position="39"/>
        <end position="42"/>
    </location>
    <ligand>
        <name>IMP</name>
        <dbReference type="ChEBI" id="CHEBI:58053"/>
        <note>ligand shared between dimeric partners</note>
    </ligand>
</feature>
<feature type="binding site" evidence="1">
    <location>
        <begin position="41"/>
        <end position="43"/>
    </location>
    <ligand>
        <name>GTP</name>
        <dbReference type="ChEBI" id="CHEBI:37565"/>
    </ligand>
</feature>
<feature type="binding site" evidence="1">
    <location>
        <position position="41"/>
    </location>
    <ligand>
        <name>Mg(2+)</name>
        <dbReference type="ChEBI" id="CHEBI:18420"/>
    </ligand>
</feature>
<feature type="binding site" description="in other chain" evidence="1">
    <location>
        <position position="130"/>
    </location>
    <ligand>
        <name>IMP</name>
        <dbReference type="ChEBI" id="CHEBI:58053"/>
        <note>ligand shared between dimeric partners</note>
    </ligand>
</feature>
<feature type="binding site" evidence="1">
    <location>
        <position position="144"/>
    </location>
    <ligand>
        <name>IMP</name>
        <dbReference type="ChEBI" id="CHEBI:58053"/>
        <note>ligand shared between dimeric partners</note>
    </ligand>
</feature>
<feature type="binding site" description="in other chain" evidence="1">
    <location>
        <position position="225"/>
    </location>
    <ligand>
        <name>IMP</name>
        <dbReference type="ChEBI" id="CHEBI:58053"/>
        <note>ligand shared between dimeric partners</note>
    </ligand>
</feature>
<feature type="binding site" description="in other chain" evidence="1">
    <location>
        <position position="240"/>
    </location>
    <ligand>
        <name>IMP</name>
        <dbReference type="ChEBI" id="CHEBI:58053"/>
        <note>ligand shared between dimeric partners</note>
    </ligand>
</feature>
<feature type="binding site" evidence="1">
    <location>
        <begin position="300"/>
        <end position="306"/>
    </location>
    <ligand>
        <name>substrate</name>
    </ligand>
</feature>
<feature type="binding site" description="in other chain" evidence="1">
    <location>
        <position position="304"/>
    </location>
    <ligand>
        <name>IMP</name>
        <dbReference type="ChEBI" id="CHEBI:58053"/>
        <note>ligand shared between dimeric partners</note>
    </ligand>
</feature>
<feature type="binding site" evidence="1">
    <location>
        <position position="306"/>
    </location>
    <ligand>
        <name>GTP</name>
        <dbReference type="ChEBI" id="CHEBI:37565"/>
    </ligand>
</feature>
<feature type="binding site" evidence="1">
    <location>
        <begin position="332"/>
        <end position="334"/>
    </location>
    <ligand>
        <name>GTP</name>
        <dbReference type="ChEBI" id="CHEBI:37565"/>
    </ligand>
</feature>
<feature type="binding site" evidence="1">
    <location>
        <begin position="415"/>
        <end position="417"/>
    </location>
    <ligand>
        <name>GTP</name>
        <dbReference type="ChEBI" id="CHEBI:37565"/>
    </ligand>
</feature>
<sequence>MGQSVVILGTQWGDEGKGKIVDLLTDKAQFVVRYQGGHNAGHTLVIDGKKTVLHLIPSGILRDNCKCIIGNGVVLAPDALLKEMNELESSGYPVRDRLFLSEACPLILPYHVALDKARELARGNKAIGTTGRGIGPAYEDKVARRGLRVGDLFNMDTFAEKLKEVMTYHNFQLTQFYGVEAVSYEDVLAAVKEYASLLISMVVDVTEMLDQARKRGDKIMFEGAQGTLLDIDHGTYPYVTSSNTTAGGVATGSGYGPRFVEYVLGIAKAYTTRVGGGPFPTELFDDVGENLCARGHEYGATTGRKRRCGWFDAVAMKRAIQINSISGFCLTKLDVLDGLDEVKICIGYKGEDGTVRDVPPMAADGYDLVTPVYESMPGWKENTFGVKSIADLPQAAINYIHRIEAITGVPIDIISTGPDRDETMILRHPFAD</sequence>
<name>PURA_TOLAT</name>
<proteinExistence type="inferred from homology"/>
<reference key="1">
    <citation type="submission" date="2009-05" db="EMBL/GenBank/DDBJ databases">
        <title>Complete sequence of Tolumonas auensis DSM 9187.</title>
        <authorList>
            <consortium name="US DOE Joint Genome Institute"/>
            <person name="Lucas S."/>
            <person name="Copeland A."/>
            <person name="Lapidus A."/>
            <person name="Glavina del Rio T."/>
            <person name="Tice H."/>
            <person name="Bruce D."/>
            <person name="Goodwin L."/>
            <person name="Pitluck S."/>
            <person name="Chertkov O."/>
            <person name="Brettin T."/>
            <person name="Detter J.C."/>
            <person name="Han C."/>
            <person name="Larimer F."/>
            <person name="Land M."/>
            <person name="Hauser L."/>
            <person name="Kyrpides N."/>
            <person name="Mikhailova N."/>
            <person name="Spring S."/>
            <person name="Beller H."/>
        </authorList>
    </citation>
    <scope>NUCLEOTIDE SEQUENCE [LARGE SCALE GENOMIC DNA]</scope>
    <source>
        <strain>DSM 9187 / NBRC 110442 / TA 4</strain>
    </source>
</reference>
<keyword id="KW-0963">Cytoplasm</keyword>
<keyword id="KW-0342">GTP-binding</keyword>
<keyword id="KW-0436">Ligase</keyword>
<keyword id="KW-0460">Magnesium</keyword>
<keyword id="KW-0479">Metal-binding</keyword>
<keyword id="KW-0547">Nucleotide-binding</keyword>
<keyword id="KW-0658">Purine biosynthesis</keyword>
<keyword id="KW-1185">Reference proteome</keyword>
<accession>C4L9M5</accession>
<protein>
    <recommendedName>
        <fullName evidence="1">Adenylosuccinate synthetase</fullName>
        <shortName evidence="1">AMPSase</shortName>
        <shortName evidence="1">AdSS</shortName>
        <ecNumber evidence="1">6.3.4.4</ecNumber>
    </recommendedName>
    <alternativeName>
        <fullName evidence="1">IMP--aspartate ligase</fullName>
    </alternativeName>
</protein>
<dbReference type="EC" id="6.3.4.4" evidence="1"/>
<dbReference type="EMBL" id="CP001616">
    <property type="protein sequence ID" value="ACQ93978.1"/>
    <property type="molecule type" value="Genomic_DNA"/>
</dbReference>
<dbReference type="RefSeq" id="WP_015879446.1">
    <property type="nucleotide sequence ID" value="NC_012691.1"/>
</dbReference>
<dbReference type="SMR" id="C4L9M5"/>
<dbReference type="STRING" id="595494.Tola_2381"/>
<dbReference type="KEGG" id="tau:Tola_2381"/>
<dbReference type="eggNOG" id="COG0104">
    <property type="taxonomic scope" value="Bacteria"/>
</dbReference>
<dbReference type="HOGENOM" id="CLU_029848_0_0_6"/>
<dbReference type="OrthoDB" id="9807553at2"/>
<dbReference type="UniPathway" id="UPA00075">
    <property type="reaction ID" value="UER00335"/>
</dbReference>
<dbReference type="Proteomes" id="UP000009073">
    <property type="component" value="Chromosome"/>
</dbReference>
<dbReference type="GO" id="GO:0005737">
    <property type="term" value="C:cytoplasm"/>
    <property type="evidence" value="ECO:0007669"/>
    <property type="project" value="UniProtKB-SubCell"/>
</dbReference>
<dbReference type="GO" id="GO:0004019">
    <property type="term" value="F:adenylosuccinate synthase activity"/>
    <property type="evidence" value="ECO:0007669"/>
    <property type="project" value="UniProtKB-UniRule"/>
</dbReference>
<dbReference type="GO" id="GO:0005525">
    <property type="term" value="F:GTP binding"/>
    <property type="evidence" value="ECO:0007669"/>
    <property type="project" value="UniProtKB-UniRule"/>
</dbReference>
<dbReference type="GO" id="GO:0000287">
    <property type="term" value="F:magnesium ion binding"/>
    <property type="evidence" value="ECO:0007669"/>
    <property type="project" value="UniProtKB-UniRule"/>
</dbReference>
<dbReference type="GO" id="GO:0044208">
    <property type="term" value="P:'de novo' AMP biosynthetic process"/>
    <property type="evidence" value="ECO:0007669"/>
    <property type="project" value="UniProtKB-UniRule"/>
</dbReference>
<dbReference type="GO" id="GO:0046040">
    <property type="term" value="P:IMP metabolic process"/>
    <property type="evidence" value="ECO:0007669"/>
    <property type="project" value="TreeGrafter"/>
</dbReference>
<dbReference type="CDD" id="cd03108">
    <property type="entry name" value="AdSS"/>
    <property type="match status" value="1"/>
</dbReference>
<dbReference type="FunFam" id="1.10.300.10:FF:000001">
    <property type="entry name" value="Adenylosuccinate synthetase"/>
    <property type="match status" value="1"/>
</dbReference>
<dbReference type="FunFam" id="3.90.170.10:FF:000001">
    <property type="entry name" value="Adenylosuccinate synthetase"/>
    <property type="match status" value="1"/>
</dbReference>
<dbReference type="Gene3D" id="3.40.440.10">
    <property type="entry name" value="Adenylosuccinate Synthetase, subunit A, domain 1"/>
    <property type="match status" value="1"/>
</dbReference>
<dbReference type="Gene3D" id="1.10.300.10">
    <property type="entry name" value="Adenylosuccinate Synthetase, subunit A, domain 2"/>
    <property type="match status" value="1"/>
</dbReference>
<dbReference type="Gene3D" id="3.90.170.10">
    <property type="entry name" value="Adenylosuccinate Synthetase, subunit A, domain 3"/>
    <property type="match status" value="1"/>
</dbReference>
<dbReference type="HAMAP" id="MF_00011">
    <property type="entry name" value="Adenylosucc_synth"/>
    <property type="match status" value="1"/>
</dbReference>
<dbReference type="InterPro" id="IPR018220">
    <property type="entry name" value="Adenylosuccin_syn_GTP-bd"/>
</dbReference>
<dbReference type="InterPro" id="IPR033128">
    <property type="entry name" value="Adenylosuccin_syn_Lys_AS"/>
</dbReference>
<dbReference type="InterPro" id="IPR042109">
    <property type="entry name" value="Adenylosuccinate_synth_dom1"/>
</dbReference>
<dbReference type="InterPro" id="IPR042110">
    <property type="entry name" value="Adenylosuccinate_synth_dom2"/>
</dbReference>
<dbReference type="InterPro" id="IPR042111">
    <property type="entry name" value="Adenylosuccinate_synth_dom3"/>
</dbReference>
<dbReference type="InterPro" id="IPR001114">
    <property type="entry name" value="Adenylosuccinate_synthetase"/>
</dbReference>
<dbReference type="InterPro" id="IPR027417">
    <property type="entry name" value="P-loop_NTPase"/>
</dbReference>
<dbReference type="NCBIfam" id="NF002223">
    <property type="entry name" value="PRK01117.1"/>
    <property type="match status" value="1"/>
</dbReference>
<dbReference type="NCBIfam" id="TIGR00184">
    <property type="entry name" value="purA"/>
    <property type="match status" value="1"/>
</dbReference>
<dbReference type="PANTHER" id="PTHR11846">
    <property type="entry name" value="ADENYLOSUCCINATE SYNTHETASE"/>
    <property type="match status" value="1"/>
</dbReference>
<dbReference type="PANTHER" id="PTHR11846:SF0">
    <property type="entry name" value="ADENYLOSUCCINATE SYNTHETASE"/>
    <property type="match status" value="1"/>
</dbReference>
<dbReference type="Pfam" id="PF00709">
    <property type="entry name" value="Adenylsucc_synt"/>
    <property type="match status" value="1"/>
</dbReference>
<dbReference type="SMART" id="SM00788">
    <property type="entry name" value="Adenylsucc_synt"/>
    <property type="match status" value="1"/>
</dbReference>
<dbReference type="SUPFAM" id="SSF52540">
    <property type="entry name" value="P-loop containing nucleoside triphosphate hydrolases"/>
    <property type="match status" value="1"/>
</dbReference>
<dbReference type="PROSITE" id="PS01266">
    <property type="entry name" value="ADENYLOSUCCIN_SYN_1"/>
    <property type="match status" value="1"/>
</dbReference>
<dbReference type="PROSITE" id="PS00513">
    <property type="entry name" value="ADENYLOSUCCIN_SYN_2"/>
    <property type="match status" value="1"/>
</dbReference>
<organism>
    <name type="scientific">Tolumonas auensis (strain DSM 9187 / NBRC 110442 / TA 4)</name>
    <dbReference type="NCBI Taxonomy" id="595494"/>
    <lineage>
        <taxon>Bacteria</taxon>
        <taxon>Pseudomonadati</taxon>
        <taxon>Pseudomonadota</taxon>
        <taxon>Gammaproteobacteria</taxon>
        <taxon>Aeromonadales</taxon>
        <taxon>Aeromonadaceae</taxon>
        <taxon>Tolumonas</taxon>
    </lineage>
</organism>